<keyword id="KW-0153">Cholesterol metabolism</keyword>
<keyword id="KW-0274">FAD</keyword>
<keyword id="KW-0285">Flavoprotein</keyword>
<keyword id="KW-0413">Isomerase</keyword>
<keyword id="KW-0443">Lipid metabolism</keyword>
<keyword id="KW-0560">Oxidoreductase</keyword>
<keyword id="KW-0753">Steroid metabolism</keyword>
<keyword id="KW-1207">Sterol metabolism</keyword>
<evidence type="ECO:0000250" key="1">
    <source>
        <dbReference type="UniProtKB" id="P12676"/>
    </source>
</evidence>
<evidence type="ECO:0000269" key="2">
    <source>
    </source>
</evidence>
<evidence type="ECO:0000303" key="3">
    <source>
    </source>
</evidence>
<evidence type="ECO:0000305" key="4"/>
<evidence type="ECO:0000305" key="5">
    <source>
    </source>
</evidence>
<evidence type="ECO:0000312" key="6">
    <source>
        <dbReference type="EMBL" id="QCC21368.1"/>
    </source>
</evidence>
<accession>A0A4D6G3C8</accession>
<comment type="function">
    <text evidence="2">Bifunctional enzyme that catalyzes the oxidation and isomerization of cholesterol to cholestenone (cholest-4-en-3-one), an initial step in the cholesterol degradation process.</text>
</comment>
<comment type="catalytic activity">
    <reaction evidence="5">
        <text>cholesterol + O2 = cholest-5-en-3-one + H2O2</text>
        <dbReference type="Rhea" id="RHEA:32183"/>
        <dbReference type="ChEBI" id="CHEBI:15379"/>
        <dbReference type="ChEBI" id="CHEBI:16113"/>
        <dbReference type="ChEBI" id="CHEBI:16240"/>
        <dbReference type="ChEBI" id="CHEBI:63906"/>
        <dbReference type="EC" id="1.1.3.6"/>
    </reaction>
</comment>
<comment type="catalytic activity">
    <reaction evidence="5">
        <text>cholest-5-en-3-one = cholest-4-en-3-one</text>
        <dbReference type="Rhea" id="RHEA:32187"/>
        <dbReference type="ChEBI" id="CHEBI:16175"/>
        <dbReference type="ChEBI" id="CHEBI:63906"/>
        <dbReference type="EC" id="5.3.3.1"/>
    </reaction>
</comment>
<comment type="cofactor">
    <cofactor evidence="1">
        <name>FAD</name>
        <dbReference type="ChEBI" id="CHEBI:57692"/>
    </cofactor>
</comment>
<comment type="pathway">
    <text evidence="4">Steroid metabolism; cholesterol degradation.</text>
</comment>
<comment type="similarity">
    <text evidence="4">Belongs to the GMC oxidoreductase family.</text>
</comment>
<protein>
    <recommendedName>
        <fullName evidence="3">Cholesterol oxidase</fullName>
        <shortName evidence="3">CHOX</shortName>
        <ecNumber evidence="5">1.1.3.6</ecNumber>
    </recommendedName>
    <alternativeName>
        <fullName evidence="4">Cholesterol isomerase</fullName>
        <ecNumber evidence="5">5.3.3.1</ecNumber>
    </alternativeName>
</protein>
<name>CHOD_ACIBA</name>
<sequence length="556" mass="62056">MTINNYDYDYLIIGSGFGGSVSACRLTEKGYSVAVMEMGRRWKAEDFAKNNWNTRRWIWRPGMKLFGYFNMRFFRHVTIICGNAVGGGSITYANTLLVPPEHIWDEGTWADAADWKNEMPQHYAEAERMLGVTDNKIFGPADHMLKKMGEAVGVGHTFKPTRVATFFPPEGEEGGKTYPDPYFNGEGPDRGTCTACGGCMTGCKHNAKNTLDKNYLYFAEKNGAKVYEETKVVDVKPLNGKADGSDGYEVTTGCSSSWFNKQRRTWRVRNVIFSASSLGTQEMLFRLKQSGSLPNISDDLGNRVRTNAESILGVRFFGKDVDMSKGVAIGSSIYIDHDTHIEATRYQSGSDAMGLMCTYMAKGKPGWTRIFFWLWALICHPFIFLRMSNPVSFARQTLIFLVMQTADASINMRLKRNWFWPFGKVLSSEGKKLPVYIPQANAFTEKVAKMFNGHPMTTITEILFNVPFTAHCMGGCAIASSPERGVVDGQNRVFNYKNLYVVDGSMLGANLGVNPSLTITALAERAMSYIPAKHTLEEQAYTQTHNEVLEAAKVSA</sequence>
<organism>
    <name type="scientific">Acinetobacter baumannii</name>
    <dbReference type="NCBI Taxonomy" id="470"/>
    <lineage>
        <taxon>Bacteria</taxon>
        <taxon>Pseudomonadati</taxon>
        <taxon>Pseudomonadota</taxon>
        <taxon>Gammaproteobacteria</taxon>
        <taxon>Moraxellales</taxon>
        <taxon>Moraxellaceae</taxon>
        <taxon>Acinetobacter</taxon>
        <taxon>Acinetobacter calcoaceticus/baumannii complex</taxon>
    </lineage>
</organism>
<dbReference type="EC" id="1.1.3.6" evidence="5"/>
<dbReference type="EC" id="5.3.3.1" evidence="5"/>
<dbReference type="EMBL" id="MK575469">
    <property type="protein sequence ID" value="QCC21368.1"/>
    <property type="molecule type" value="Genomic_DNA"/>
</dbReference>
<dbReference type="UniPathway" id="UPA01058"/>
<dbReference type="GO" id="GO:0016995">
    <property type="term" value="F:cholesterol oxidase activity"/>
    <property type="evidence" value="ECO:0007669"/>
    <property type="project" value="UniProtKB-EC"/>
</dbReference>
<dbReference type="GO" id="GO:0016853">
    <property type="term" value="F:isomerase activity"/>
    <property type="evidence" value="ECO:0007669"/>
    <property type="project" value="UniProtKB-KW"/>
</dbReference>
<dbReference type="GO" id="GO:0008203">
    <property type="term" value="P:cholesterol metabolic process"/>
    <property type="evidence" value="ECO:0007669"/>
    <property type="project" value="UniProtKB-KW"/>
</dbReference>
<dbReference type="Gene3D" id="3.50.50.60">
    <property type="entry name" value="FAD/NAD(P)-binding domain"/>
    <property type="match status" value="3"/>
</dbReference>
<dbReference type="InterPro" id="IPR017896">
    <property type="entry name" value="4Fe4S_Fe-S-bd"/>
</dbReference>
<dbReference type="InterPro" id="IPR052542">
    <property type="entry name" value="Cholesterol_Oxidase"/>
</dbReference>
<dbReference type="InterPro" id="IPR036188">
    <property type="entry name" value="FAD/NAD-bd_sf"/>
</dbReference>
<dbReference type="InterPro" id="IPR007867">
    <property type="entry name" value="GMC_OxRtase_C"/>
</dbReference>
<dbReference type="PANTHER" id="PTHR47470">
    <property type="entry name" value="CHOLESTEROL OXIDASE"/>
    <property type="match status" value="1"/>
</dbReference>
<dbReference type="PANTHER" id="PTHR47470:SF1">
    <property type="entry name" value="FAD-DEPENDENT OXIDOREDUCTASE 2 FAD BINDING DOMAIN-CONTAINING PROTEIN"/>
    <property type="match status" value="1"/>
</dbReference>
<dbReference type="Pfam" id="PF05199">
    <property type="entry name" value="GMC_oxred_C"/>
    <property type="match status" value="1"/>
</dbReference>
<dbReference type="Pfam" id="PF13450">
    <property type="entry name" value="NAD_binding_8"/>
    <property type="match status" value="1"/>
</dbReference>
<dbReference type="SUPFAM" id="SSF51905">
    <property type="entry name" value="FAD/NAD(P)-binding domain"/>
    <property type="match status" value="1"/>
</dbReference>
<proteinExistence type="evidence at protein level"/>
<gene>
    <name evidence="3" type="primary">choxAB</name>
</gene>
<feature type="chain" id="PRO_0000461402" description="Cholesterol oxidase">
    <location>
        <begin position="1"/>
        <end position="556"/>
    </location>
</feature>
<feature type="active site" description="Proton acceptor" evidence="1">
    <location>
        <position position="471"/>
    </location>
</feature>
<feature type="binding site" evidence="1">
    <location>
        <position position="18"/>
    </location>
    <ligand>
        <name>FAD</name>
        <dbReference type="ChEBI" id="CHEBI:57692"/>
    </ligand>
</feature>
<feature type="binding site" evidence="1">
    <location>
        <position position="37"/>
    </location>
    <ligand>
        <name>FAD</name>
        <dbReference type="ChEBI" id="CHEBI:57692"/>
    </ligand>
</feature>
<feature type="binding site" evidence="1">
    <location>
        <position position="88"/>
    </location>
    <ligand>
        <name>FAD</name>
        <dbReference type="ChEBI" id="CHEBI:57692"/>
    </ligand>
</feature>
<feature type="binding site" evidence="1">
    <location>
        <position position="93"/>
    </location>
    <ligand>
        <name>FAD</name>
        <dbReference type="ChEBI" id="CHEBI:57692"/>
    </ligand>
</feature>
<feature type="binding site" evidence="1">
    <location>
        <position position="235"/>
    </location>
    <ligand>
        <name>FAD</name>
        <dbReference type="ChEBI" id="CHEBI:57692"/>
    </ligand>
</feature>
<feature type="binding site" evidence="1">
    <location>
        <position position="504"/>
    </location>
    <ligand>
        <name>FAD</name>
        <dbReference type="ChEBI" id="CHEBI:57692"/>
    </ligand>
</feature>
<reference evidence="6" key="1">
    <citation type="journal article" date="2021" name="FEBS Open Bio">
        <title>Cloning, expression, and in silico structural modeling of cholesterol oxidase of Acinetobacter sp. strain RAMD in E. coli.</title>
        <authorList>
            <person name="Mahmoud H.E."/>
            <person name="El-Far S.W."/>
            <person name="Embaby A.M."/>
        </authorList>
    </citation>
    <scope>NUCLEOTIDE SEQUENCE [GENOMIC DNA]</scope>
    <scope>FUNCTION</scope>
    <scope>CATALYTIC ACTIVITY</scope>
    <source>
        <strain>RAMD</strain>
    </source>
</reference>